<dbReference type="EC" id="2.1.1.355"/>
<dbReference type="EMBL" id="CM000071">
    <property type="protein sequence ID" value="EDY69183.2"/>
    <property type="molecule type" value="Genomic_DNA"/>
</dbReference>
<dbReference type="SMR" id="Q28Z18"/>
<dbReference type="FunCoup" id="Q28Z18">
    <property type="interactions" value="1832"/>
</dbReference>
<dbReference type="STRING" id="46245.Q28Z18"/>
<dbReference type="eggNOG" id="KOG1141">
    <property type="taxonomic scope" value="Eukaryota"/>
</dbReference>
<dbReference type="HOGENOM" id="CLU_003279_0_1_1"/>
<dbReference type="InParanoid" id="Q28Z18"/>
<dbReference type="OMA" id="LLCCDCE"/>
<dbReference type="Proteomes" id="UP000001819">
    <property type="component" value="Unplaced"/>
</dbReference>
<dbReference type="GO" id="GO:0005694">
    <property type="term" value="C:chromosome"/>
    <property type="evidence" value="ECO:0007669"/>
    <property type="project" value="UniProtKB-SubCell"/>
</dbReference>
<dbReference type="GO" id="GO:0005634">
    <property type="term" value="C:nucleus"/>
    <property type="evidence" value="ECO:0007669"/>
    <property type="project" value="UniProtKB-SubCell"/>
</dbReference>
<dbReference type="GO" id="GO:0003677">
    <property type="term" value="F:DNA binding"/>
    <property type="evidence" value="ECO:0007669"/>
    <property type="project" value="InterPro"/>
</dbReference>
<dbReference type="GO" id="GO:0140949">
    <property type="term" value="F:histone H3K9 trimethyltransferase activity"/>
    <property type="evidence" value="ECO:0007669"/>
    <property type="project" value="UniProtKB-EC"/>
</dbReference>
<dbReference type="GO" id="GO:0008270">
    <property type="term" value="F:zinc ion binding"/>
    <property type="evidence" value="ECO:0007669"/>
    <property type="project" value="InterPro"/>
</dbReference>
<dbReference type="GO" id="GO:0070828">
    <property type="term" value="P:heterochromatin organization"/>
    <property type="evidence" value="ECO:0007669"/>
    <property type="project" value="TreeGrafter"/>
</dbReference>
<dbReference type="GO" id="GO:0032259">
    <property type="term" value="P:methylation"/>
    <property type="evidence" value="ECO:0007669"/>
    <property type="project" value="UniProtKB-KW"/>
</dbReference>
<dbReference type="GO" id="GO:0010629">
    <property type="term" value="P:negative regulation of gene expression"/>
    <property type="evidence" value="ECO:0007669"/>
    <property type="project" value="TreeGrafter"/>
</dbReference>
<dbReference type="GO" id="GO:0048477">
    <property type="term" value="P:oogenesis"/>
    <property type="evidence" value="ECO:0007669"/>
    <property type="project" value="UniProtKB-KW"/>
</dbReference>
<dbReference type="CDD" id="cd01395">
    <property type="entry name" value="HMT_MBD"/>
    <property type="match status" value="1"/>
</dbReference>
<dbReference type="CDD" id="cd10517">
    <property type="entry name" value="SET_SETDB1"/>
    <property type="match status" value="1"/>
</dbReference>
<dbReference type="CDD" id="cd20382">
    <property type="entry name" value="Tudor_SETDB1_rpt1"/>
    <property type="match status" value="1"/>
</dbReference>
<dbReference type="CDD" id="cd21181">
    <property type="entry name" value="Tudor_SETDB1_rpt2"/>
    <property type="match status" value="1"/>
</dbReference>
<dbReference type="FunFam" id="3.30.890.10:FF:000011">
    <property type="entry name" value="Histone-lysine N-methyltransferase eggless"/>
    <property type="match status" value="1"/>
</dbReference>
<dbReference type="FunFam" id="2.170.270.10:FF:000029">
    <property type="entry name" value="Histone-lysine N-methyltransferase SETDB2"/>
    <property type="match status" value="1"/>
</dbReference>
<dbReference type="Gene3D" id="2.30.30.140">
    <property type="match status" value="2"/>
</dbReference>
<dbReference type="Gene3D" id="3.30.890.10">
    <property type="entry name" value="Methyl-cpg-binding Protein 2, Chain A"/>
    <property type="match status" value="1"/>
</dbReference>
<dbReference type="Gene3D" id="2.170.270.10">
    <property type="entry name" value="SET domain"/>
    <property type="match status" value="1"/>
</dbReference>
<dbReference type="InterPro" id="IPR016177">
    <property type="entry name" value="DNA-bd_dom_sf"/>
</dbReference>
<dbReference type="InterPro" id="IPR001739">
    <property type="entry name" value="Methyl_CpG_DNA-bd"/>
</dbReference>
<dbReference type="InterPro" id="IPR003616">
    <property type="entry name" value="Post-SET_dom"/>
</dbReference>
<dbReference type="InterPro" id="IPR007728">
    <property type="entry name" value="Pre-SET_dom"/>
</dbReference>
<dbReference type="InterPro" id="IPR001214">
    <property type="entry name" value="SET_dom"/>
</dbReference>
<dbReference type="InterPro" id="IPR046341">
    <property type="entry name" value="SET_dom_sf"/>
</dbReference>
<dbReference type="InterPro" id="IPR047232">
    <property type="entry name" value="SETDB1/2-like_MBD"/>
</dbReference>
<dbReference type="InterPro" id="IPR051516">
    <property type="entry name" value="SETDB_methyltransferase"/>
</dbReference>
<dbReference type="InterPro" id="IPR041292">
    <property type="entry name" value="Tudor_4"/>
</dbReference>
<dbReference type="InterPro" id="IPR041291">
    <property type="entry name" value="TUDOR_5"/>
</dbReference>
<dbReference type="PANTHER" id="PTHR46024">
    <property type="entry name" value="HISTONE-LYSINE N-METHYLTRANSFERASE EGGLESS"/>
    <property type="match status" value="1"/>
</dbReference>
<dbReference type="PANTHER" id="PTHR46024:SF1">
    <property type="entry name" value="HISTONE-LYSINE N-METHYLTRANSFERASE EGGLESS"/>
    <property type="match status" value="1"/>
</dbReference>
<dbReference type="Pfam" id="PF01429">
    <property type="entry name" value="MBD"/>
    <property type="match status" value="1"/>
</dbReference>
<dbReference type="Pfam" id="PF05033">
    <property type="entry name" value="Pre-SET"/>
    <property type="match status" value="1"/>
</dbReference>
<dbReference type="Pfam" id="PF00856">
    <property type="entry name" value="SET"/>
    <property type="match status" value="1"/>
</dbReference>
<dbReference type="Pfam" id="PF18358">
    <property type="entry name" value="Tudor_4"/>
    <property type="match status" value="1"/>
</dbReference>
<dbReference type="Pfam" id="PF18359">
    <property type="entry name" value="Tudor_5"/>
    <property type="match status" value="1"/>
</dbReference>
<dbReference type="SMART" id="SM00391">
    <property type="entry name" value="MBD"/>
    <property type="match status" value="1"/>
</dbReference>
<dbReference type="SMART" id="SM00468">
    <property type="entry name" value="PreSET"/>
    <property type="match status" value="1"/>
</dbReference>
<dbReference type="SMART" id="SM00317">
    <property type="entry name" value="SET"/>
    <property type="match status" value="1"/>
</dbReference>
<dbReference type="SUPFAM" id="SSF54171">
    <property type="entry name" value="DNA-binding domain"/>
    <property type="match status" value="1"/>
</dbReference>
<dbReference type="SUPFAM" id="SSF82199">
    <property type="entry name" value="SET domain"/>
    <property type="match status" value="1"/>
</dbReference>
<dbReference type="PROSITE" id="PS50982">
    <property type="entry name" value="MBD"/>
    <property type="match status" value="1"/>
</dbReference>
<dbReference type="PROSITE" id="PS50868">
    <property type="entry name" value="POST_SET"/>
    <property type="match status" value="1"/>
</dbReference>
<dbReference type="PROSITE" id="PS50867">
    <property type="entry name" value="PRE_SET"/>
    <property type="match status" value="1"/>
</dbReference>
<dbReference type="PROSITE" id="PS50280">
    <property type="entry name" value="SET"/>
    <property type="match status" value="1"/>
</dbReference>
<proteinExistence type="inferred from homology"/>
<feature type="chain" id="PRO_0000281823" description="Histone-lysine N-methyltransferase eggless">
    <location>
        <begin position="1"/>
        <end position="1254"/>
    </location>
</feature>
<feature type="domain" description="Tudor 1">
    <location>
        <begin position="535"/>
        <end position="607"/>
    </location>
</feature>
<feature type="domain" description="Tudor 2">
    <location>
        <begin position="634"/>
        <end position="691"/>
    </location>
</feature>
<feature type="domain" description="MBD" evidence="6">
    <location>
        <begin position="811"/>
        <end position="877"/>
    </location>
</feature>
<feature type="domain" description="Pre-SET" evidence="4">
    <location>
        <begin position="939"/>
        <end position="1011"/>
    </location>
</feature>
<feature type="domain" description="SET" evidence="5">
    <location>
        <begin position="1014"/>
        <end position="1229"/>
    </location>
</feature>
<feature type="domain" description="Post-SET" evidence="3">
    <location>
        <begin position="1238"/>
        <end position="1254"/>
    </location>
</feature>
<feature type="region of interest" description="Disordered" evidence="7">
    <location>
        <begin position="24"/>
        <end position="209"/>
    </location>
</feature>
<feature type="region of interest" description="Disordered" evidence="7">
    <location>
        <begin position="228"/>
        <end position="248"/>
    </location>
</feature>
<feature type="region of interest" description="Disordered" evidence="7">
    <location>
        <begin position="734"/>
        <end position="760"/>
    </location>
</feature>
<feature type="region of interest" description="Disordered" evidence="7">
    <location>
        <begin position="1081"/>
        <end position="1139"/>
    </location>
</feature>
<feature type="coiled-coil region" evidence="2">
    <location>
        <begin position="391"/>
        <end position="416"/>
    </location>
</feature>
<feature type="compositionally biased region" description="Basic and acidic residues" evidence="7">
    <location>
        <begin position="40"/>
        <end position="57"/>
    </location>
</feature>
<feature type="compositionally biased region" description="Basic and acidic residues" evidence="7">
    <location>
        <begin position="65"/>
        <end position="81"/>
    </location>
</feature>
<feature type="compositionally biased region" description="Low complexity" evidence="7">
    <location>
        <begin position="112"/>
        <end position="125"/>
    </location>
</feature>
<feature type="compositionally biased region" description="Basic and acidic residues" evidence="7">
    <location>
        <begin position="136"/>
        <end position="162"/>
    </location>
</feature>
<feature type="compositionally biased region" description="Polar residues" evidence="7">
    <location>
        <begin position="172"/>
        <end position="181"/>
    </location>
</feature>
<feature type="compositionally biased region" description="Basic and acidic residues" evidence="7">
    <location>
        <begin position="182"/>
        <end position="197"/>
    </location>
</feature>
<feature type="compositionally biased region" description="Basic and acidic residues" evidence="7">
    <location>
        <begin position="234"/>
        <end position="243"/>
    </location>
</feature>
<feature type="compositionally biased region" description="Low complexity" evidence="7">
    <location>
        <begin position="739"/>
        <end position="759"/>
    </location>
</feature>
<feature type="compositionally biased region" description="Basic and acidic residues" evidence="7">
    <location>
        <begin position="1081"/>
        <end position="1090"/>
    </location>
</feature>
<feature type="compositionally biased region" description="Acidic residues" evidence="7">
    <location>
        <begin position="1091"/>
        <end position="1106"/>
    </location>
</feature>
<feature type="compositionally biased region" description="Low complexity" evidence="7">
    <location>
        <begin position="1123"/>
        <end position="1134"/>
    </location>
</feature>
<feature type="binding site" evidence="1">
    <location>
        <position position="941"/>
    </location>
    <ligand>
        <name>Zn(2+)</name>
        <dbReference type="ChEBI" id="CHEBI:29105"/>
        <label>1</label>
    </ligand>
</feature>
<feature type="binding site" evidence="1">
    <location>
        <position position="941"/>
    </location>
    <ligand>
        <name>Zn(2+)</name>
        <dbReference type="ChEBI" id="CHEBI:29105"/>
        <label>2</label>
    </ligand>
</feature>
<feature type="binding site" evidence="1">
    <location>
        <position position="943"/>
    </location>
    <ligand>
        <name>Zn(2+)</name>
        <dbReference type="ChEBI" id="CHEBI:29105"/>
        <label>1</label>
    </ligand>
</feature>
<feature type="binding site" evidence="1">
    <location>
        <position position="947"/>
    </location>
    <ligand>
        <name>Zn(2+)</name>
        <dbReference type="ChEBI" id="CHEBI:29105"/>
        <label>1</label>
    </ligand>
</feature>
<feature type="binding site" evidence="1">
    <location>
        <position position="947"/>
    </location>
    <ligand>
        <name>Zn(2+)</name>
        <dbReference type="ChEBI" id="CHEBI:29105"/>
        <label>3</label>
    </ligand>
</feature>
<feature type="binding site" evidence="1">
    <location>
        <position position="953"/>
    </location>
    <ligand>
        <name>Zn(2+)</name>
        <dbReference type="ChEBI" id="CHEBI:29105"/>
        <label>1</label>
    </ligand>
</feature>
<feature type="binding site" evidence="1">
    <location>
        <position position="955"/>
    </location>
    <ligand>
        <name>Zn(2+)</name>
        <dbReference type="ChEBI" id="CHEBI:29105"/>
        <label>2</label>
    </ligand>
</feature>
<feature type="binding site" evidence="1">
    <location>
        <position position="993"/>
    </location>
    <ligand>
        <name>Zn(2+)</name>
        <dbReference type="ChEBI" id="CHEBI:29105"/>
        <label>2</label>
    </ligand>
</feature>
<feature type="binding site" evidence="1">
    <location>
        <position position="993"/>
    </location>
    <ligand>
        <name>Zn(2+)</name>
        <dbReference type="ChEBI" id="CHEBI:29105"/>
        <label>3</label>
    </ligand>
</feature>
<feature type="binding site" evidence="1">
    <location>
        <position position="997"/>
    </location>
    <ligand>
        <name>Zn(2+)</name>
        <dbReference type="ChEBI" id="CHEBI:29105"/>
        <label>2</label>
    </ligand>
</feature>
<feature type="binding site" evidence="1">
    <location>
        <position position="999"/>
    </location>
    <ligand>
        <name>Zn(2+)</name>
        <dbReference type="ChEBI" id="CHEBI:29105"/>
        <label>3</label>
    </ligand>
</feature>
<feature type="binding site" evidence="1">
    <location>
        <position position="1003"/>
    </location>
    <ligand>
        <name>Zn(2+)</name>
        <dbReference type="ChEBI" id="CHEBI:29105"/>
        <label>3</label>
    </ligand>
</feature>
<feature type="binding site" evidence="1">
    <location>
        <begin position="1024"/>
        <end position="1026"/>
    </location>
    <ligand>
        <name>S-adenosyl-L-methionine</name>
        <dbReference type="ChEBI" id="CHEBI:59789"/>
    </ligand>
</feature>
<feature type="binding site" evidence="5">
    <location>
        <position position="1062"/>
    </location>
    <ligand>
        <name>S-adenosyl-L-methionine</name>
        <dbReference type="ChEBI" id="CHEBI:59789"/>
    </ligand>
</feature>
<feature type="binding site" evidence="5">
    <location>
        <position position="1064"/>
    </location>
    <ligand>
        <name>S-adenosyl-L-methionine</name>
        <dbReference type="ChEBI" id="CHEBI:59789"/>
    </ligand>
</feature>
<feature type="binding site" evidence="5">
    <location>
        <position position="1183"/>
    </location>
    <ligand>
        <name>S-adenosyl-L-methionine</name>
        <dbReference type="ChEBI" id="CHEBI:59789"/>
    </ligand>
</feature>
<feature type="binding site" evidence="1">
    <location>
        <begin position="1186"/>
        <end position="1187"/>
    </location>
    <ligand>
        <name>S-adenosyl-L-methionine</name>
        <dbReference type="ChEBI" id="CHEBI:59789"/>
    </ligand>
</feature>
<feature type="binding site" evidence="1">
    <location>
        <position position="1189"/>
    </location>
    <ligand>
        <name>Zn(2+)</name>
        <dbReference type="ChEBI" id="CHEBI:29105"/>
        <label>4</label>
    </ligand>
</feature>
<feature type="binding site" evidence="1">
    <location>
        <position position="1242"/>
    </location>
    <ligand>
        <name>Zn(2+)</name>
        <dbReference type="ChEBI" id="CHEBI:29105"/>
        <label>4</label>
    </ligand>
</feature>
<feature type="binding site" evidence="1">
    <location>
        <position position="1244"/>
    </location>
    <ligand>
        <name>Zn(2+)</name>
        <dbReference type="ChEBI" id="CHEBI:29105"/>
        <label>4</label>
    </ligand>
</feature>
<feature type="binding site" evidence="1">
    <location>
        <position position="1249"/>
    </location>
    <ligand>
        <name>Zn(2+)</name>
        <dbReference type="ChEBI" id="CHEBI:29105"/>
        <label>4</label>
    </ligand>
</feature>
<accession>Q28Z18</accession>
<accession>B5DZD5</accession>
<accession>B5DZD6</accession>
<comment type="function">
    <text evidence="1">Histone methyltransferase that specifically trimethylates 'Lys-9' of histone H3 in ovary. H3 'Lys-9' trimethylation represents a specific tag for epigenetic transcriptional repression by recruiting Su(var)205/HP1 to methylated histones. Plays a central role during oogenesis (By similarity).</text>
</comment>
<comment type="catalytic activity">
    <reaction>
        <text>L-lysyl(9)-[histone H3] + 3 S-adenosyl-L-methionine = N(6),N(6),N(6)-trimethyl-L-lysyl(9)-[histone H3] + 3 S-adenosyl-L-homocysteine + 3 H(+)</text>
        <dbReference type="Rhea" id="RHEA:60276"/>
        <dbReference type="Rhea" id="RHEA-COMP:15538"/>
        <dbReference type="Rhea" id="RHEA-COMP:15546"/>
        <dbReference type="ChEBI" id="CHEBI:15378"/>
        <dbReference type="ChEBI" id="CHEBI:29969"/>
        <dbReference type="ChEBI" id="CHEBI:57856"/>
        <dbReference type="ChEBI" id="CHEBI:59789"/>
        <dbReference type="ChEBI" id="CHEBI:61961"/>
        <dbReference type="EC" id="2.1.1.355"/>
    </reaction>
</comment>
<comment type="subcellular location">
    <subcellularLocation>
        <location evidence="1">Nucleus</location>
    </subcellularLocation>
    <subcellularLocation>
        <location evidence="1">Chromosome</location>
    </subcellularLocation>
</comment>
<comment type="domain">
    <text evidence="1">In the pre-SET domain, Cys residues bind 3 zinc ions that are arranged in a triangular cluster; some of these Cys residues contribute to the binding of two zinc ions within the cluster.</text>
</comment>
<comment type="similarity">
    <text evidence="5">Belongs to the class V-like SAM-binding methyltransferase superfamily. Histone-lysine methyltransferase family. Suvar3-9 subfamily.</text>
</comment>
<name>SETB1_DROPS</name>
<gene>
    <name type="primary">egg</name>
    <name type="ORF">GA30484</name>
</gene>
<reference key="1">
    <citation type="journal article" date="2005" name="Genome Res.">
        <title>Comparative genome sequencing of Drosophila pseudoobscura: chromosomal, gene, and cis-element evolution.</title>
        <authorList>
            <person name="Richards S."/>
            <person name="Liu Y."/>
            <person name="Bettencourt B.R."/>
            <person name="Hradecky P."/>
            <person name="Letovsky S."/>
            <person name="Nielsen R."/>
            <person name="Thornton K."/>
            <person name="Hubisz M.J."/>
            <person name="Chen R."/>
            <person name="Meisel R.P."/>
            <person name="Couronne O."/>
            <person name="Hua S."/>
            <person name="Smith M.A."/>
            <person name="Zhang P."/>
            <person name="Liu J."/>
            <person name="Bussemaker H.J."/>
            <person name="van Batenburg M.F."/>
            <person name="Howells S.L."/>
            <person name="Scherer S.E."/>
            <person name="Sodergren E."/>
            <person name="Matthews B.B."/>
            <person name="Crosby M.A."/>
            <person name="Schroeder A.J."/>
            <person name="Ortiz-Barrientos D."/>
            <person name="Rives C.M."/>
            <person name="Metzker M.L."/>
            <person name="Muzny D.M."/>
            <person name="Scott G."/>
            <person name="Steffen D."/>
            <person name="Wheeler D.A."/>
            <person name="Worley K.C."/>
            <person name="Havlak P."/>
            <person name="Durbin K.J."/>
            <person name="Egan A."/>
            <person name="Gill R."/>
            <person name="Hume J."/>
            <person name="Morgan M.B."/>
            <person name="Miner G."/>
            <person name="Hamilton C."/>
            <person name="Huang Y."/>
            <person name="Waldron L."/>
            <person name="Verduzco D."/>
            <person name="Clerc-Blankenburg K.P."/>
            <person name="Dubchak I."/>
            <person name="Noor M.A.F."/>
            <person name="Anderson W."/>
            <person name="White K.P."/>
            <person name="Clark A.G."/>
            <person name="Schaeffer S.W."/>
            <person name="Gelbart W.M."/>
            <person name="Weinstock G.M."/>
            <person name="Gibbs R.A."/>
        </authorList>
    </citation>
    <scope>NUCLEOTIDE SEQUENCE [LARGE SCALE GENOMIC DNA]</scope>
    <source>
        <strain>MV2-25 / Tucson 14011-0121.94</strain>
    </source>
</reference>
<sequence>MASESAAMDILDSAEASLNVASTALVEKEKKVQPATDETTPEKKAKMEIDAEMKDLTNDIPNSRKSQEKDPDALEDAKDPEADSSIELLCSPTPAEATDVDAMASKTESDNSVELLESPLKSPSSNDVNDEELLPLEEKEKPGPAKELEPKESEPDSKESSKSEALADSSIELISSPTSDDSLAKEKEVEVKEEHGQQAEAQVLQEIPRKADDSFKLQDDIAMEEDVPVPRSKAMQESKETQKTSKTTTKLEPLVDSIKDAIEDCINCNCKRLKKQYVLACVAILNFYKVPRKLKRSQYVCLDCYDTAVEMYEEYAGLLLAKQPLLLREFKQEQADFVTLDSSDEEEDEKTPEKPEFSKNVLDLIENELEDAIKKTLNKVEFSNQFNWSKTILQAKIERLAKKFEEVDLQLAQVQGLADKMHCSVYNSCQVVHKQLPPLDLHQNICPSDYKRLQQLPAAGDIVRPPIKIGETYYAVKNKAIASWVSVSVMEICDTTTGGGVTVKAYKIKYQHMPYPMMKTVAAKHLAYFDPPTVRLPIGTRVIAFFDGTLVGGKEKGVVQSAFYPGIIAEPLKQNNRFRYLIFYDDGYTQYVHHSDVRLVCQASEKVWEDVHPASRDFIQKYVERYAVDRPMVQCTKGQSMNTESNGTWLYARVIEVDCSLVLMQFEADKNHTEWIYRGSLRLAPVFKETQNSLNADCAIHQMRVPRRTEPFIRYTKEMESSNMQVDQQIRAIARKSTSKSGSPASTAAPPTGSSSSSAVRHLNNSTIYVDDDTRPKGQVVHFTAKRNMPPKIFKSHKCNPGCPFPMMHRLDSYSPLSKPLLSGWERMFMKQKTKRTVVYRGPCGRNLRNMAEVHNYLRLTNNVLNVDNFDFTPDLRCLAEYYIESTIVKEADISKGQEKMAIPLVNYYDNTLPPPCEYAKQRIPTEGVNLNLDEEFLVCCDCEDDCSDKESCACWQLTVTGVRYCNPKKPIEEIGYQYKRLHEGVLTGIYECNSRCKCKKNCLNRVVQHSLEMKLQVFKTSNRGWGLRCVNDIPKGAFVCIYAGHLLTEAKANEGGQDAGDEYFADLDYIEVAEQLKEGYESDVERADLDHEDDNYGPDAEDDDDFRPNNYYQKKKEKLRSSRSNSSSTQNTELDSQERTVISFNPNTDLDETVRENSVRRFFGKDQTPFIMDAKTTGNLGRYFNHSCSPNLFVQNVFVDTHDLRFPWVGFFASSHIRSGTELTWNYNYEVGVVPNKVLYCQCGAQNCRVRLL</sequence>
<protein>
    <recommendedName>
        <fullName>Histone-lysine N-methyltransferase eggless</fullName>
        <ecNumber>2.1.1.355</ecNumber>
    </recommendedName>
    <alternativeName>
        <fullName>SETDB1 homolog</fullName>
    </alternativeName>
</protein>
<organism>
    <name type="scientific">Drosophila pseudoobscura pseudoobscura</name>
    <name type="common">Fruit fly</name>
    <dbReference type="NCBI Taxonomy" id="46245"/>
    <lineage>
        <taxon>Eukaryota</taxon>
        <taxon>Metazoa</taxon>
        <taxon>Ecdysozoa</taxon>
        <taxon>Arthropoda</taxon>
        <taxon>Hexapoda</taxon>
        <taxon>Insecta</taxon>
        <taxon>Pterygota</taxon>
        <taxon>Neoptera</taxon>
        <taxon>Endopterygota</taxon>
        <taxon>Diptera</taxon>
        <taxon>Brachycera</taxon>
        <taxon>Muscomorpha</taxon>
        <taxon>Ephydroidea</taxon>
        <taxon>Drosophilidae</taxon>
        <taxon>Drosophila</taxon>
        <taxon>Sophophora</taxon>
    </lineage>
</organism>
<evidence type="ECO:0000250" key="1"/>
<evidence type="ECO:0000255" key="2"/>
<evidence type="ECO:0000255" key="3">
    <source>
        <dbReference type="PROSITE-ProRule" id="PRU00155"/>
    </source>
</evidence>
<evidence type="ECO:0000255" key="4">
    <source>
        <dbReference type="PROSITE-ProRule" id="PRU00157"/>
    </source>
</evidence>
<evidence type="ECO:0000255" key="5">
    <source>
        <dbReference type="PROSITE-ProRule" id="PRU00190"/>
    </source>
</evidence>
<evidence type="ECO:0000255" key="6">
    <source>
        <dbReference type="PROSITE-ProRule" id="PRU00338"/>
    </source>
</evidence>
<evidence type="ECO:0000256" key="7">
    <source>
        <dbReference type="SAM" id="MobiDB-lite"/>
    </source>
</evidence>
<keyword id="KW-0156">Chromatin regulator</keyword>
<keyword id="KW-0158">Chromosome</keyword>
<keyword id="KW-0175">Coiled coil</keyword>
<keyword id="KW-0217">Developmental protein</keyword>
<keyword id="KW-0221">Differentiation</keyword>
<keyword id="KW-0479">Metal-binding</keyword>
<keyword id="KW-0489">Methyltransferase</keyword>
<keyword id="KW-0539">Nucleus</keyword>
<keyword id="KW-0896">Oogenesis</keyword>
<keyword id="KW-1185">Reference proteome</keyword>
<keyword id="KW-0677">Repeat</keyword>
<keyword id="KW-0678">Repressor</keyword>
<keyword id="KW-0949">S-adenosyl-L-methionine</keyword>
<keyword id="KW-0804">Transcription</keyword>
<keyword id="KW-0805">Transcription regulation</keyword>
<keyword id="KW-0808">Transferase</keyword>
<keyword id="KW-0862">Zinc</keyword>